<protein>
    <recommendedName>
        <fullName evidence="1">Maltoporin</fullName>
    </recommendedName>
    <alternativeName>
        <fullName evidence="1">Maltose-inducible porin</fullName>
    </alternativeName>
</protein>
<evidence type="ECO:0000255" key="1">
    <source>
        <dbReference type="HAMAP-Rule" id="MF_01301"/>
    </source>
</evidence>
<gene>
    <name evidence="1" type="primary">lamB</name>
    <name type="ordered locus">EcolC_3993</name>
</gene>
<keyword id="KW-0998">Cell outer membrane</keyword>
<keyword id="KW-0406">Ion transport</keyword>
<keyword id="KW-0472">Membrane</keyword>
<keyword id="KW-0626">Porin</keyword>
<keyword id="KW-0732">Signal</keyword>
<keyword id="KW-0762">Sugar transport</keyword>
<keyword id="KW-0812">Transmembrane</keyword>
<keyword id="KW-1134">Transmembrane beta strand</keyword>
<keyword id="KW-0813">Transport</keyword>
<comment type="function">
    <text evidence="1">Involved in the transport of maltose and maltodextrins.</text>
</comment>
<comment type="catalytic activity">
    <reaction evidence="1">
        <text>beta-maltose(in) = beta-maltose(out)</text>
        <dbReference type="Rhea" id="RHEA:29731"/>
        <dbReference type="ChEBI" id="CHEBI:18147"/>
    </reaction>
</comment>
<comment type="subunit">
    <text evidence="1">Homotrimer formed of three 18-stranded antiparallel beta-barrels, containing three independent channels.</text>
</comment>
<comment type="subcellular location">
    <subcellularLocation>
        <location evidence="1">Cell outer membrane</location>
        <topology evidence="1">Multi-pass membrane protein</topology>
    </subcellularLocation>
</comment>
<comment type="induction">
    <text evidence="1">By maltose.</text>
</comment>
<comment type="similarity">
    <text evidence="1">Belongs to the porin LamB (TC 1.B.3) family.</text>
</comment>
<dbReference type="EMBL" id="CP000946">
    <property type="protein sequence ID" value="ACA79592.1"/>
    <property type="molecule type" value="Genomic_DNA"/>
</dbReference>
<dbReference type="RefSeq" id="WP_000973658.1">
    <property type="nucleotide sequence ID" value="NZ_MTFT01000033.1"/>
</dbReference>
<dbReference type="SMR" id="B1IUL5"/>
<dbReference type="GeneID" id="93777799"/>
<dbReference type="KEGG" id="ecl:EcolC_3993"/>
<dbReference type="HOGENOM" id="CLU_032473_4_1_6"/>
<dbReference type="GO" id="GO:0009279">
    <property type="term" value="C:cell outer membrane"/>
    <property type="evidence" value="ECO:0007669"/>
    <property type="project" value="UniProtKB-SubCell"/>
</dbReference>
<dbReference type="GO" id="GO:0046930">
    <property type="term" value="C:pore complex"/>
    <property type="evidence" value="ECO:0007669"/>
    <property type="project" value="UniProtKB-KW"/>
</dbReference>
<dbReference type="GO" id="GO:0042958">
    <property type="term" value="F:maltodextrin transmembrane transporter activity"/>
    <property type="evidence" value="ECO:0007669"/>
    <property type="project" value="InterPro"/>
</dbReference>
<dbReference type="GO" id="GO:0015481">
    <property type="term" value="F:maltose transporting porin activity"/>
    <property type="evidence" value="ECO:0007669"/>
    <property type="project" value="InterPro"/>
</dbReference>
<dbReference type="GO" id="GO:0006811">
    <property type="term" value="P:monoatomic ion transport"/>
    <property type="evidence" value="ECO:0007669"/>
    <property type="project" value="UniProtKB-KW"/>
</dbReference>
<dbReference type="CDD" id="cd01346">
    <property type="entry name" value="Maltoporin-like"/>
    <property type="match status" value="1"/>
</dbReference>
<dbReference type="FunFam" id="2.40.170.10:FF:000001">
    <property type="entry name" value="Maltoporin"/>
    <property type="match status" value="1"/>
</dbReference>
<dbReference type="Gene3D" id="2.40.170.10">
    <property type="entry name" value="Porin, LamB type"/>
    <property type="match status" value="1"/>
</dbReference>
<dbReference type="HAMAP" id="MF_01301">
    <property type="entry name" value="LamB"/>
    <property type="match status" value="1"/>
</dbReference>
<dbReference type="InterPro" id="IPR050286">
    <property type="entry name" value="G_neg_Bact_CarbUptk_Porin"/>
</dbReference>
<dbReference type="InterPro" id="IPR023738">
    <property type="entry name" value="Maltoporin"/>
</dbReference>
<dbReference type="InterPro" id="IPR003192">
    <property type="entry name" value="Porin_LamB"/>
</dbReference>
<dbReference type="InterPro" id="IPR036998">
    <property type="entry name" value="Porin_LamB_sf"/>
</dbReference>
<dbReference type="NCBIfam" id="NF006860">
    <property type="entry name" value="PRK09360.1"/>
    <property type="match status" value="1"/>
</dbReference>
<dbReference type="PANTHER" id="PTHR38762">
    <property type="entry name" value="CRYPTIC OUTER MEMBRANE PORIN BGLH-RELATED"/>
    <property type="match status" value="1"/>
</dbReference>
<dbReference type="PANTHER" id="PTHR38762:SF1">
    <property type="entry name" value="CRYPTIC OUTER MEMBRANE PORIN BGLH-RELATED"/>
    <property type="match status" value="1"/>
</dbReference>
<dbReference type="Pfam" id="PF02264">
    <property type="entry name" value="LamB"/>
    <property type="match status" value="1"/>
</dbReference>
<dbReference type="SUPFAM" id="SSF56935">
    <property type="entry name" value="Porins"/>
    <property type="match status" value="1"/>
</dbReference>
<feature type="signal peptide" evidence="1">
    <location>
        <begin position="1"/>
        <end position="25"/>
    </location>
</feature>
<feature type="chain" id="PRO_5000314021" description="Maltoporin">
    <location>
        <begin position="26"/>
        <end position="446"/>
    </location>
</feature>
<feature type="site" description="Greasy slide, important in sugar transport" evidence="1">
    <location>
        <position position="31"/>
    </location>
</feature>
<feature type="site" description="Greasy slide, important in sugar transport" evidence="1">
    <location>
        <position position="66"/>
    </location>
</feature>
<feature type="site" description="Greasy slide, important in sugar transport" evidence="1">
    <location>
        <position position="99"/>
    </location>
</feature>
<feature type="site" description="Important in sugar transport" evidence="1">
    <location>
        <position position="143"/>
    </location>
</feature>
<feature type="site" description="Greasy slide, important in sugar transport" evidence="1">
    <location>
        <position position="252"/>
    </location>
</feature>
<feature type="site" description="Greasy slide, important in sugar transport" evidence="1">
    <location>
        <position position="383"/>
    </location>
</feature>
<feature type="site" description="Greasy slide, important in sugar transport" evidence="1">
    <location>
        <position position="445"/>
    </location>
</feature>
<organism>
    <name type="scientific">Escherichia coli (strain ATCC 8739 / DSM 1576 / NBRC 3972 / NCIMB 8545 / WDCM 00012 / Crooks)</name>
    <dbReference type="NCBI Taxonomy" id="481805"/>
    <lineage>
        <taxon>Bacteria</taxon>
        <taxon>Pseudomonadati</taxon>
        <taxon>Pseudomonadota</taxon>
        <taxon>Gammaproteobacteria</taxon>
        <taxon>Enterobacterales</taxon>
        <taxon>Enterobacteriaceae</taxon>
        <taxon>Escherichia</taxon>
    </lineage>
</organism>
<accession>B1IUL5</accession>
<reference key="1">
    <citation type="submission" date="2008-02" db="EMBL/GenBank/DDBJ databases">
        <title>Complete sequence of Escherichia coli C str. ATCC 8739.</title>
        <authorList>
            <person name="Copeland A."/>
            <person name="Lucas S."/>
            <person name="Lapidus A."/>
            <person name="Glavina del Rio T."/>
            <person name="Dalin E."/>
            <person name="Tice H."/>
            <person name="Bruce D."/>
            <person name="Goodwin L."/>
            <person name="Pitluck S."/>
            <person name="Kiss H."/>
            <person name="Brettin T."/>
            <person name="Detter J.C."/>
            <person name="Han C."/>
            <person name="Kuske C.R."/>
            <person name="Schmutz J."/>
            <person name="Larimer F."/>
            <person name="Land M."/>
            <person name="Hauser L."/>
            <person name="Kyrpides N."/>
            <person name="Mikhailova N."/>
            <person name="Ingram L."/>
            <person name="Richardson P."/>
        </authorList>
    </citation>
    <scope>NUCLEOTIDE SEQUENCE [LARGE SCALE GENOMIC DNA]</scope>
    <source>
        <strain>ATCC 8739 / DSM 1576 / NBRC 3972 / NCIMB 8545 / WDCM 00012 / Crooks</strain>
    </source>
</reference>
<name>LAMB_ECOLC</name>
<proteinExistence type="inferred from homology"/>
<sequence>MMITLRKLPLAVAVAAGVMSAQAMAVDFHGYARSGIGWTGSGGEQQCFQTTGAQSKYRLGNECETYAELKLGQEVWKEGDKSFYFDTNVAYSVAQQNDWEATDPAFREANVQGKNLIEWLPGSTIWAGKRFYQRHDVHMIDFYYWDISGPGAGLENIDVGFGKLSLAATRSSEAGGSSSFASNNIYDYTNETANDVFDVRLAQMEINPGGTLELGVDYGRANLRDNYRLVDGASKDGWLFTAEHTQSVLKGFNKFVVQYATDSMTSQGKGLSQGSGVAFDNEKFAYNINNNGHMLRILDHGAISMGDNWDMMYVGMYQDINWDNDNGTKWWTVGIRPMYKWTPIMSTVMEIGYDNVESQRTGDKNNQYKITLAQQWQAGDSIWSRPAIRVFATYAKWDEKWGYDYNGDSKVNPNYGKAVPADFNGGSFGRGDSDEWTFGAQMEIWW</sequence>